<gene>
    <name evidence="1" type="primary">speE</name>
    <name type="ordered locus">SBO_0110</name>
</gene>
<sequence length="288" mass="32409">MAEKKQWHETLHDQFGQYFAVDNVLYHEKTDHQDLIIFENAAFGRVMALDGVVQTTERDEFIYHEMMTHVPLLAHGHAKHVLIIGGGDGAMLREVTRHKNVESITMVEIDAGVVSFCRQYLPNHNADSYDDPRFKLVIDDGVNFVNQTSQTFDVIISDCTDPIGPGESLFTSAFYEGCKRCLNPSGIFVAQNGVCFLQQEEAIDSHRKLSHYFSDVGFYQAAIPTYYGGIMTFAWATDNDALRHLSTEIIQARFLASGLKCRYYNPAIHTAAFALPQYLQDALASQPS</sequence>
<feature type="chain" id="PRO_1000012017" description="Polyamine aminopropyltransferase">
    <location>
        <begin position="1"/>
        <end position="288"/>
    </location>
</feature>
<feature type="domain" description="PABS" evidence="1">
    <location>
        <begin position="9"/>
        <end position="238"/>
    </location>
</feature>
<feature type="active site" description="Proton acceptor" evidence="1">
    <location>
        <position position="158"/>
    </location>
</feature>
<feature type="binding site" evidence="1">
    <location>
        <position position="33"/>
    </location>
    <ligand>
        <name>S-methyl-5'-thioadenosine</name>
        <dbReference type="ChEBI" id="CHEBI:17509"/>
    </ligand>
</feature>
<feature type="binding site" evidence="1">
    <location>
        <position position="64"/>
    </location>
    <ligand>
        <name>spermidine</name>
        <dbReference type="ChEBI" id="CHEBI:57834"/>
    </ligand>
</feature>
<feature type="binding site" evidence="1">
    <location>
        <position position="88"/>
    </location>
    <ligand>
        <name>spermidine</name>
        <dbReference type="ChEBI" id="CHEBI:57834"/>
    </ligand>
</feature>
<feature type="binding site" evidence="1">
    <location>
        <position position="108"/>
    </location>
    <ligand>
        <name>S-methyl-5'-thioadenosine</name>
        <dbReference type="ChEBI" id="CHEBI:17509"/>
    </ligand>
</feature>
<feature type="binding site" evidence="1">
    <location>
        <begin position="140"/>
        <end position="141"/>
    </location>
    <ligand>
        <name>S-methyl-5'-thioadenosine</name>
        <dbReference type="ChEBI" id="CHEBI:17509"/>
    </ligand>
</feature>
<feature type="binding site" evidence="1">
    <location>
        <begin position="158"/>
        <end position="161"/>
    </location>
    <ligand>
        <name>spermidine</name>
        <dbReference type="ChEBI" id="CHEBI:57834"/>
    </ligand>
</feature>
<feature type="binding site" evidence="1">
    <location>
        <position position="165"/>
    </location>
    <ligand>
        <name>S-methyl-5'-thioadenosine</name>
        <dbReference type="ChEBI" id="CHEBI:17509"/>
    </ligand>
</feature>
<protein>
    <recommendedName>
        <fullName evidence="1">Polyamine aminopropyltransferase</fullName>
    </recommendedName>
    <alternativeName>
        <fullName evidence="1">Putrescine aminopropyltransferase</fullName>
        <shortName evidence="1">PAPT</shortName>
    </alternativeName>
    <alternativeName>
        <fullName evidence="1">Spermidine synthase</fullName>
        <shortName evidence="1">SPDS</shortName>
        <shortName evidence="1">SPDSY</shortName>
        <ecNumber evidence="1">2.5.1.16</ecNumber>
    </alternativeName>
</protein>
<organism>
    <name type="scientific">Shigella boydii serotype 4 (strain Sb227)</name>
    <dbReference type="NCBI Taxonomy" id="300268"/>
    <lineage>
        <taxon>Bacteria</taxon>
        <taxon>Pseudomonadati</taxon>
        <taxon>Pseudomonadota</taxon>
        <taxon>Gammaproteobacteria</taxon>
        <taxon>Enterobacterales</taxon>
        <taxon>Enterobacteriaceae</taxon>
        <taxon>Shigella</taxon>
    </lineage>
</organism>
<dbReference type="EC" id="2.5.1.16" evidence="1"/>
<dbReference type="EMBL" id="CP000036">
    <property type="protein sequence ID" value="ABB64843.1"/>
    <property type="molecule type" value="Genomic_DNA"/>
</dbReference>
<dbReference type="RefSeq" id="WP_000818402.1">
    <property type="nucleotide sequence ID" value="NC_007613.1"/>
</dbReference>
<dbReference type="SMR" id="Q326B5"/>
<dbReference type="KEGG" id="sbo:SBO_0110"/>
<dbReference type="HOGENOM" id="CLU_048199_0_0_6"/>
<dbReference type="UniPathway" id="UPA00248">
    <property type="reaction ID" value="UER00314"/>
</dbReference>
<dbReference type="Proteomes" id="UP000007067">
    <property type="component" value="Chromosome"/>
</dbReference>
<dbReference type="GO" id="GO:0005829">
    <property type="term" value="C:cytosol"/>
    <property type="evidence" value="ECO:0007669"/>
    <property type="project" value="TreeGrafter"/>
</dbReference>
<dbReference type="GO" id="GO:0004766">
    <property type="term" value="F:spermidine synthase activity"/>
    <property type="evidence" value="ECO:0007669"/>
    <property type="project" value="UniProtKB-UniRule"/>
</dbReference>
<dbReference type="GO" id="GO:0008295">
    <property type="term" value="P:spermidine biosynthetic process"/>
    <property type="evidence" value="ECO:0007669"/>
    <property type="project" value="UniProtKB-UniRule"/>
</dbReference>
<dbReference type="CDD" id="cd02440">
    <property type="entry name" value="AdoMet_MTases"/>
    <property type="match status" value="1"/>
</dbReference>
<dbReference type="FunFam" id="2.30.140.10:FF:000002">
    <property type="entry name" value="Polyamine aminopropyltransferase"/>
    <property type="match status" value="1"/>
</dbReference>
<dbReference type="FunFam" id="3.40.50.150:FF:000026">
    <property type="entry name" value="Polyamine aminopropyltransferase"/>
    <property type="match status" value="1"/>
</dbReference>
<dbReference type="Gene3D" id="2.30.140.10">
    <property type="entry name" value="Spermidine synthase, tetramerisation domain"/>
    <property type="match status" value="1"/>
</dbReference>
<dbReference type="Gene3D" id="3.40.50.150">
    <property type="entry name" value="Vaccinia Virus protein VP39"/>
    <property type="match status" value="1"/>
</dbReference>
<dbReference type="HAMAP" id="MF_00198">
    <property type="entry name" value="Spermidine_synth"/>
    <property type="match status" value="1"/>
</dbReference>
<dbReference type="InterPro" id="IPR030374">
    <property type="entry name" value="PABS"/>
</dbReference>
<dbReference type="InterPro" id="IPR030373">
    <property type="entry name" value="PABS_CS"/>
</dbReference>
<dbReference type="InterPro" id="IPR029063">
    <property type="entry name" value="SAM-dependent_MTases_sf"/>
</dbReference>
<dbReference type="InterPro" id="IPR001045">
    <property type="entry name" value="Spermi_synthase"/>
</dbReference>
<dbReference type="InterPro" id="IPR035246">
    <property type="entry name" value="Spermidine_synt_N"/>
</dbReference>
<dbReference type="InterPro" id="IPR037163">
    <property type="entry name" value="Spermidine_synt_N_sf"/>
</dbReference>
<dbReference type="NCBIfam" id="NF037959">
    <property type="entry name" value="MFS_SpdSyn"/>
    <property type="match status" value="1"/>
</dbReference>
<dbReference type="NCBIfam" id="NF002010">
    <property type="entry name" value="PRK00811.1"/>
    <property type="match status" value="1"/>
</dbReference>
<dbReference type="NCBIfam" id="TIGR00417">
    <property type="entry name" value="speE"/>
    <property type="match status" value="1"/>
</dbReference>
<dbReference type="PANTHER" id="PTHR11558:SF11">
    <property type="entry name" value="SPERMIDINE SYNTHASE"/>
    <property type="match status" value="1"/>
</dbReference>
<dbReference type="PANTHER" id="PTHR11558">
    <property type="entry name" value="SPERMIDINE/SPERMINE SYNTHASE"/>
    <property type="match status" value="1"/>
</dbReference>
<dbReference type="Pfam" id="PF17284">
    <property type="entry name" value="Spermine_synt_N"/>
    <property type="match status" value="1"/>
</dbReference>
<dbReference type="Pfam" id="PF01564">
    <property type="entry name" value="Spermine_synth"/>
    <property type="match status" value="1"/>
</dbReference>
<dbReference type="SUPFAM" id="SSF53335">
    <property type="entry name" value="S-adenosyl-L-methionine-dependent methyltransferases"/>
    <property type="match status" value="1"/>
</dbReference>
<dbReference type="PROSITE" id="PS01330">
    <property type="entry name" value="PABS_1"/>
    <property type="match status" value="1"/>
</dbReference>
<dbReference type="PROSITE" id="PS51006">
    <property type="entry name" value="PABS_2"/>
    <property type="match status" value="1"/>
</dbReference>
<proteinExistence type="inferred from homology"/>
<evidence type="ECO:0000255" key="1">
    <source>
        <dbReference type="HAMAP-Rule" id="MF_00198"/>
    </source>
</evidence>
<reference key="1">
    <citation type="journal article" date="2005" name="Nucleic Acids Res.">
        <title>Genome dynamics and diversity of Shigella species, the etiologic agents of bacillary dysentery.</title>
        <authorList>
            <person name="Yang F."/>
            <person name="Yang J."/>
            <person name="Zhang X."/>
            <person name="Chen L."/>
            <person name="Jiang Y."/>
            <person name="Yan Y."/>
            <person name="Tang X."/>
            <person name="Wang J."/>
            <person name="Xiong Z."/>
            <person name="Dong J."/>
            <person name="Xue Y."/>
            <person name="Zhu Y."/>
            <person name="Xu X."/>
            <person name="Sun L."/>
            <person name="Chen S."/>
            <person name="Nie H."/>
            <person name="Peng J."/>
            <person name="Xu J."/>
            <person name="Wang Y."/>
            <person name="Yuan Z."/>
            <person name="Wen Y."/>
            <person name="Yao Z."/>
            <person name="Shen Y."/>
            <person name="Qiang B."/>
            <person name="Hou Y."/>
            <person name="Yu J."/>
            <person name="Jin Q."/>
        </authorList>
    </citation>
    <scope>NUCLEOTIDE SEQUENCE [LARGE SCALE GENOMIC DNA]</scope>
    <source>
        <strain>Sb227</strain>
    </source>
</reference>
<name>SPEE_SHIBS</name>
<comment type="function">
    <text evidence="1">Catalyzes the irreversible transfer of a propylamine group from the amino donor S-adenosylmethioninamine (decarboxy-AdoMet) to putrescine (1,4-diaminobutane) to yield spermidine.</text>
</comment>
<comment type="catalytic activity">
    <reaction evidence="1">
        <text>S-adenosyl 3-(methylsulfanyl)propylamine + putrescine = S-methyl-5'-thioadenosine + spermidine + H(+)</text>
        <dbReference type="Rhea" id="RHEA:12721"/>
        <dbReference type="ChEBI" id="CHEBI:15378"/>
        <dbReference type="ChEBI" id="CHEBI:17509"/>
        <dbReference type="ChEBI" id="CHEBI:57443"/>
        <dbReference type="ChEBI" id="CHEBI:57834"/>
        <dbReference type="ChEBI" id="CHEBI:326268"/>
        <dbReference type="EC" id="2.5.1.16"/>
    </reaction>
</comment>
<comment type="pathway">
    <text evidence="1">Amine and polyamine biosynthesis; spermidine biosynthesis; spermidine from putrescine: step 1/1.</text>
</comment>
<comment type="subunit">
    <text evidence="1">Homodimer or homotetramer.</text>
</comment>
<comment type="subcellular location">
    <subcellularLocation>
        <location evidence="1">Cytoplasm</location>
    </subcellularLocation>
</comment>
<comment type="similarity">
    <text evidence="1">Belongs to the spermidine/spermine synthase family.</text>
</comment>
<keyword id="KW-0963">Cytoplasm</keyword>
<keyword id="KW-0620">Polyamine biosynthesis</keyword>
<keyword id="KW-0745">Spermidine biosynthesis</keyword>
<keyword id="KW-0808">Transferase</keyword>
<accession>Q326B5</accession>